<organism>
    <name type="scientific">Paraburkholderia xenovorans (strain LB400)</name>
    <dbReference type="NCBI Taxonomy" id="266265"/>
    <lineage>
        <taxon>Bacteria</taxon>
        <taxon>Pseudomonadati</taxon>
        <taxon>Pseudomonadota</taxon>
        <taxon>Betaproteobacteria</taxon>
        <taxon>Burkholderiales</taxon>
        <taxon>Burkholderiaceae</taxon>
        <taxon>Paraburkholderia</taxon>
    </lineage>
</organism>
<gene>
    <name evidence="1" type="primary">rimP</name>
    <name type="ordered locus">Bxeno_A1603</name>
    <name type="ORF">Bxe_A2822</name>
</gene>
<accession>Q140U8</accession>
<feature type="chain" id="PRO_1000064698" description="Ribosome maturation factor RimP">
    <location>
        <begin position="1"/>
        <end position="152"/>
    </location>
</feature>
<dbReference type="EMBL" id="CP000270">
    <property type="protein sequence ID" value="ABE30141.1"/>
    <property type="molecule type" value="Genomic_DNA"/>
</dbReference>
<dbReference type="RefSeq" id="WP_007182297.1">
    <property type="nucleotide sequence ID" value="NZ_CP008760.1"/>
</dbReference>
<dbReference type="SMR" id="Q140U8"/>
<dbReference type="STRING" id="266265.Bxe_A2822"/>
<dbReference type="GeneID" id="97036820"/>
<dbReference type="KEGG" id="bxb:DR64_504"/>
<dbReference type="KEGG" id="bxe:Bxe_A2822"/>
<dbReference type="eggNOG" id="COG0779">
    <property type="taxonomic scope" value="Bacteria"/>
</dbReference>
<dbReference type="OrthoDB" id="9805006at2"/>
<dbReference type="Proteomes" id="UP000001817">
    <property type="component" value="Chromosome 1"/>
</dbReference>
<dbReference type="GO" id="GO:0005829">
    <property type="term" value="C:cytosol"/>
    <property type="evidence" value="ECO:0007669"/>
    <property type="project" value="TreeGrafter"/>
</dbReference>
<dbReference type="GO" id="GO:0000028">
    <property type="term" value="P:ribosomal small subunit assembly"/>
    <property type="evidence" value="ECO:0007669"/>
    <property type="project" value="TreeGrafter"/>
</dbReference>
<dbReference type="GO" id="GO:0006412">
    <property type="term" value="P:translation"/>
    <property type="evidence" value="ECO:0007669"/>
    <property type="project" value="TreeGrafter"/>
</dbReference>
<dbReference type="CDD" id="cd01734">
    <property type="entry name" value="YlxS_C"/>
    <property type="match status" value="1"/>
</dbReference>
<dbReference type="Gene3D" id="2.30.30.180">
    <property type="entry name" value="Ribosome maturation factor RimP, C-terminal domain"/>
    <property type="match status" value="1"/>
</dbReference>
<dbReference type="Gene3D" id="3.30.300.70">
    <property type="entry name" value="RimP-like superfamily, N-terminal"/>
    <property type="match status" value="1"/>
</dbReference>
<dbReference type="HAMAP" id="MF_01077">
    <property type="entry name" value="RimP"/>
    <property type="match status" value="1"/>
</dbReference>
<dbReference type="InterPro" id="IPR003728">
    <property type="entry name" value="Ribosome_maturation_RimP"/>
</dbReference>
<dbReference type="InterPro" id="IPR028998">
    <property type="entry name" value="RimP_C"/>
</dbReference>
<dbReference type="InterPro" id="IPR036847">
    <property type="entry name" value="RimP_C_sf"/>
</dbReference>
<dbReference type="InterPro" id="IPR028989">
    <property type="entry name" value="RimP_N"/>
</dbReference>
<dbReference type="InterPro" id="IPR035956">
    <property type="entry name" value="RimP_N_sf"/>
</dbReference>
<dbReference type="NCBIfam" id="NF000929">
    <property type="entry name" value="PRK00092.2-1"/>
    <property type="match status" value="1"/>
</dbReference>
<dbReference type="PANTHER" id="PTHR33867">
    <property type="entry name" value="RIBOSOME MATURATION FACTOR RIMP"/>
    <property type="match status" value="1"/>
</dbReference>
<dbReference type="PANTHER" id="PTHR33867:SF1">
    <property type="entry name" value="RIBOSOME MATURATION FACTOR RIMP"/>
    <property type="match status" value="1"/>
</dbReference>
<dbReference type="Pfam" id="PF17384">
    <property type="entry name" value="DUF150_C"/>
    <property type="match status" value="1"/>
</dbReference>
<dbReference type="Pfam" id="PF02576">
    <property type="entry name" value="RimP_N"/>
    <property type="match status" value="1"/>
</dbReference>
<dbReference type="SUPFAM" id="SSF74942">
    <property type="entry name" value="YhbC-like, C-terminal domain"/>
    <property type="match status" value="1"/>
</dbReference>
<dbReference type="SUPFAM" id="SSF75420">
    <property type="entry name" value="YhbC-like, N-terminal domain"/>
    <property type="match status" value="1"/>
</dbReference>
<comment type="function">
    <text evidence="1">Required for maturation of 30S ribosomal subunits.</text>
</comment>
<comment type="subcellular location">
    <subcellularLocation>
        <location evidence="1">Cytoplasm</location>
    </subcellularLocation>
</comment>
<comment type="similarity">
    <text evidence="1">Belongs to the RimP family.</text>
</comment>
<reference key="1">
    <citation type="journal article" date="2006" name="Proc. Natl. Acad. Sci. U.S.A.">
        <title>Burkholderia xenovorans LB400 harbors a multi-replicon, 9.73-Mbp genome shaped for versatility.</title>
        <authorList>
            <person name="Chain P.S.G."/>
            <person name="Denef V.J."/>
            <person name="Konstantinidis K.T."/>
            <person name="Vergez L.M."/>
            <person name="Agullo L."/>
            <person name="Reyes V.L."/>
            <person name="Hauser L."/>
            <person name="Cordova M."/>
            <person name="Gomez L."/>
            <person name="Gonzalez M."/>
            <person name="Land M."/>
            <person name="Lao V."/>
            <person name="Larimer F."/>
            <person name="LiPuma J.J."/>
            <person name="Mahenthiralingam E."/>
            <person name="Malfatti S.A."/>
            <person name="Marx C.J."/>
            <person name="Parnell J.J."/>
            <person name="Ramette A."/>
            <person name="Richardson P."/>
            <person name="Seeger M."/>
            <person name="Smith D."/>
            <person name="Spilker T."/>
            <person name="Sul W.J."/>
            <person name="Tsoi T.V."/>
            <person name="Ulrich L.E."/>
            <person name="Zhulin I.B."/>
            <person name="Tiedje J.M."/>
        </authorList>
    </citation>
    <scope>NUCLEOTIDE SEQUENCE [LARGE SCALE GENOMIC DNA]</scope>
    <source>
        <strain>LB400</strain>
    </source>
</reference>
<protein>
    <recommendedName>
        <fullName evidence="1">Ribosome maturation factor RimP</fullName>
    </recommendedName>
</protein>
<sequence>MQLTELIETTVVGLGYELVDLERTGRGMLCIYIDQPAGIAIEDCEKVTRQLQHVLTVENIDYERLEVSSPGLDRPLKKLADFERFAGSEVVITLKKPLDGRKSYRGILHAPQGETIGLEFEGKEGAAMLDFTLADMDKARLVPKVDFRSRKQ</sequence>
<proteinExistence type="inferred from homology"/>
<evidence type="ECO:0000255" key="1">
    <source>
        <dbReference type="HAMAP-Rule" id="MF_01077"/>
    </source>
</evidence>
<name>RIMP_PARXL</name>
<keyword id="KW-0963">Cytoplasm</keyword>
<keyword id="KW-1185">Reference proteome</keyword>
<keyword id="KW-0690">Ribosome biogenesis</keyword>